<proteinExistence type="inferred from homology"/>
<feature type="chain" id="PRO_1000203540" description="Phosphoserine aminotransferase">
    <location>
        <begin position="1"/>
        <end position="356"/>
    </location>
</feature>
<feature type="binding site" evidence="1">
    <location>
        <position position="41"/>
    </location>
    <ligand>
        <name>L-glutamate</name>
        <dbReference type="ChEBI" id="CHEBI:29985"/>
    </ligand>
</feature>
<feature type="binding site" evidence="1">
    <location>
        <begin position="75"/>
        <end position="76"/>
    </location>
    <ligand>
        <name>pyridoxal 5'-phosphate</name>
        <dbReference type="ChEBI" id="CHEBI:597326"/>
    </ligand>
</feature>
<feature type="binding site" evidence="1">
    <location>
        <position position="100"/>
    </location>
    <ligand>
        <name>pyridoxal 5'-phosphate</name>
        <dbReference type="ChEBI" id="CHEBI:597326"/>
    </ligand>
</feature>
<feature type="binding site" evidence="1">
    <location>
        <position position="147"/>
    </location>
    <ligand>
        <name>pyridoxal 5'-phosphate</name>
        <dbReference type="ChEBI" id="CHEBI:597326"/>
    </ligand>
</feature>
<feature type="binding site" evidence="1">
    <location>
        <position position="166"/>
    </location>
    <ligand>
        <name>pyridoxal 5'-phosphate</name>
        <dbReference type="ChEBI" id="CHEBI:597326"/>
    </ligand>
</feature>
<feature type="binding site" evidence="1">
    <location>
        <position position="189"/>
    </location>
    <ligand>
        <name>pyridoxal 5'-phosphate</name>
        <dbReference type="ChEBI" id="CHEBI:597326"/>
    </ligand>
</feature>
<feature type="binding site" evidence="1">
    <location>
        <begin position="227"/>
        <end position="228"/>
    </location>
    <ligand>
        <name>pyridoxal 5'-phosphate</name>
        <dbReference type="ChEBI" id="CHEBI:597326"/>
    </ligand>
</feature>
<feature type="modified residue" description="N6-(pyridoxal phosphate)lysine" evidence="1">
    <location>
        <position position="190"/>
    </location>
</feature>
<dbReference type="EC" id="2.6.1.52" evidence="1"/>
<dbReference type="EMBL" id="CP001615">
    <property type="protein sequence ID" value="ACQ69554.1"/>
    <property type="molecule type" value="Genomic_DNA"/>
</dbReference>
<dbReference type="RefSeq" id="WP_012726673.1">
    <property type="nucleotide sequence ID" value="NC_012673.1"/>
</dbReference>
<dbReference type="SMR" id="C4L432"/>
<dbReference type="STRING" id="360911.EAT1b_0623"/>
<dbReference type="KEGG" id="eat:EAT1b_0623"/>
<dbReference type="eggNOG" id="COG1932">
    <property type="taxonomic scope" value="Bacteria"/>
</dbReference>
<dbReference type="HOGENOM" id="CLU_034866_0_2_9"/>
<dbReference type="OrthoDB" id="9809412at2"/>
<dbReference type="UniPathway" id="UPA00135">
    <property type="reaction ID" value="UER00197"/>
</dbReference>
<dbReference type="Proteomes" id="UP000000716">
    <property type="component" value="Chromosome"/>
</dbReference>
<dbReference type="GO" id="GO:0005737">
    <property type="term" value="C:cytoplasm"/>
    <property type="evidence" value="ECO:0007669"/>
    <property type="project" value="UniProtKB-SubCell"/>
</dbReference>
<dbReference type="GO" id="GO:0004648">
    <property type="term" value="F:O-phospho-L-serine:2-oxoglutarate aminotransferase activity"/>
    <property type="evidence" value="ECO:0007669"/>
    <property type="project" value="UniProtKB-UniRule"/>
</dbReference>
<dbReference type="GO" id="GO:0030170">
    <property type="term" value="F:pyridoxal phosphate binding"/>
    <property type="evidence" value="ECO:0007669"/>
    <property type="project" value="UniProtKB-UniRule"/>
</dbReference>
<dbReference type="GO" id="GO:0006564">
    <property type="term" value="P:L-serine biosynthetic process"/>
    <property type="evidence" value="ECO:0007669"/>
    <property type="project" value="UniProtKB-UniRule"/>
</dbReference>
<dbReference type="FunFam" id="3.40.640.10:FF:000010">
    <property type="entry name" value="Phosphoserine aminotransferase"/>
    <property type="match status" value="1"/>
</dbReference>
<dbReference type="FunFam" id="3.90.1150.10:FF:000006">
    <property type="entry name" value="Phosphoserine aminotransferase"/>
    <property type="match status" value="1"/>
</dbReference>
<dbReference type="Gene3D" id="3.90.1150.10">
    <property type="entry name" value="Aspartate Aminotransferase, domain 1"/>
    <property type="match status" value="1"/>
</dbReference>
<dbReference type="Gene3D" id="3.40.640.10">
    <property type="entry name" value="Type I PLP-dependent aspartate aminotransferase-like (Major domain)"/>
    <property type="match status" value="1"/>
</dbReference>
<dbReference type="HAMAP" id="MF_00160">
    <property type="entry name" value="SerC_aminotrans_5"/>
    <property type="match status" value="1"/>
</dbReference>
<dbReference type="InterPro" id="IPR000192">
    <property type="entry name" value="Aminotrans_V_dom"/>
</dbReference>
<dbReference type="InterPro" id="IPR020578">
    <property type="entry name" value="Aminotrans_V_PyrdxlP_BS"/>
</dbReference>
<dbReference type="InterPro" id="IPR022278">
    <property type="entry name" value="Pser_aminoTfrase"/>
</dbReference>
<dbReference type="InterPro" id="IPR015424">
    <property type="entry name" value="PyrdxlP-dep_Trfase"/>
</dbReference>
<dbReference type="InterPro" id="IPR015421">
    <property type="entry name" value="PyrdxlP-dep_Trfase_major"/>
</dbReference>
<dbReference type="InterPro" id="IPR015422">
    <property type="entry name" value="PyrdxlP-dep_Trfase_small"/>
</dbReference>
<dbReference type="NCBIfam" id="NF003764">
    <property type="entry name" value="PRK05355.1"/>
    <property type="match status" value="1"/>
</dbReference>
<dbReference type="PANTHER" id="PTHR43247">
    <property type="entry name" value="PHOSPHOSERINE AMINOTRANSFERASE"/>
    <property type="match status" value="1"/>
</dbReference>
<dbReference type="PANTHER" id="PTHR43247:SF1">
    <property type="entry name" value="PHOSPHOSERINE AMINOTRANSFERASE"/>
    <property type="match status" value="1"/>
</dbReference>
<dbReference type="Pfam" id="PF00266">
    <property type="entry name" value="Aminotran_5"/>
    <property type="match status" value="1"/>
</dbReference>
<dbReference type="PIRSF" id="PIRSF000525">
    <property type="entry name" value="SerC"/>
    <property type="match status" value="1"/>
</dbReference>
<dbReference type="SUPFAM" id="SSF53383">
    <property type="entry name" value="PLP-dependent transferases"/>
    <property type="match status" value="1"/>
</dbReference>
<dbReference type="PROSITE" id="PS00595">
    <property type="entry name" value="AA_TRANSFER_CLASS_5"/>
    <property type="match status" value="1"/>
</dbReference>
<evidence type="ECO:0000255" key="1">
    <source>
        <dbReference type="HAMAP-Rule" id="MF_00160"/>
    </source>
</evidence>
<sequence>MSTYTYSAGPGMLPTEVMQEIQQHLLTFEYEGVSIIETSHRSASFQRVVDSLEWRLRRLMHIPENYAVLWLQGGATLQFSMIPMNLRKQNRFAYVDTGIWSKKAMEDAKHFGEVDVIHPLVDATGGMSFESSLVQEVDYLHVTLNNTIEGTRFTHIPEIDVPLIADASSNILAEQIDVERFGVIYAGAQKNIGPAGLTVVIIRRDLIQSLQLPSYLQYASHVDTLFNTPSTFSMYAAERVLKWVEDCGGVEAMERLNRQKSDRIYSYLEESTCFSPIVTGERRSLTNIPFSTGNQELDQRFERYALERGLLELGGHRSVGGLRASLYNAMPLEGAERLVDVMRAFEEETHVSHQNI</sequence>
<name>SERC_EXISA</name>
<gene>
    <name evidence="1" type="primary">serC</name>
    <name type="ordered locus">EAT1b_0623</name>
</gene>
<organism>
    <name type="scientific">Exiguobacterium sp. (strain ATCC BAA-1283 / AT1b)</name>
    <dbReference type="NCBI Taxonomy" id="360911"/>
    <lineage>
        <taxon>Bacteria</taxon>
        <taxon>Bacillati</taxon>
        <taxon>Bacillota</taxon>
        <taxon>Bacilli</taxon>
        <taxon>Bacillales</taxon>
        <taxon>Bacillales Family XII. Incertae Sedis</taxon>
        <taxon>Exiguobacterium</taxon>
    </lineage>
</organism>
<keyword id="KW-0028">Amino-acid biosynthesis</keyword>
<keyword id="KW-0032">Aminotransferase</keyword>
<keyword id="KW-0963">Cytoplasm</keyword>
<keyword id="KW-0663">Pyridoxal phosphate</keyword>
<keyword id="KW-0718">Serine biosynthesis</keyword>
<keyword id="KW-0808">Transferase</keyword>
<comment type="function">
    <text evidence="1">Catalyzes the reversible conversion of 3-phosphohydroxypyruvate to phosphoserine and of 3-hydroxy-2-oxo-4-phosphonooxybutanoate to phosphohydroxythreonine.</text>
</comment>
<comment type="catalytic activity">
    <reaction evidence="1">
        <text>O-phospho-L-serine + 2-oxoglutarate = 3-phosphooxypyruvate + L-glutamate</text>
        <dbReference type="Rhea" id="RHEA:14329"/>
        <dbReference type="ChEBI" id="CHEBI:16810"/>
        <dbReference type="ChEBI" id="CHEBI:18110"/>
        <dbReference type="ChEBI" id="CHEBI:29985"/>
        <dbReference type="ChEBI" id="CHEBI:57524"/>
        <dbReference type="EC" id="2.6.1.52"/>
    </reaction>
</comment>
<comment type="catalytic activity">
    <reaction evidence="1">
        <text>4-(phosphooxy)-L-threonine + 2-oxoglutarate = (R)-3-hydroxy-2-oxo-4-phosphooxybutanoate + L-glutamate</text>
        <dbReference type="Rhea" id="RHEA:16573"/>
        <dbReference type="ChEBI" id="CHEBI:16810"/>
        <dbReference type="ChEBI" id="CHEBI:29985"/>
        <dbReference type="ChEBI" id="CHEBI:58452"/>
        <dbReference type="ChEBI" id="CHEBI:58538"/>
        <dbReference type="EC" id="2.6.1.52"/>
    </reaction>
</comment>
<comment type="cofactor">
    <cofactor evidence="1">
        <name>pyridoxal 5'-phosphate</name>
        <dbReference type="ChEBI" id="CHEBI:597326"/>
    </cofactor>
    <text evidence="1">Binds 1 pyridoxal phosphate per subunit.</text>
</comment>
<comment type="pathway">
    <text evidence="1">Amino-acid biosynthesis; L-serine biosynthesis; L-serine from 3-phospho-D-glycerate: step 2/3.</text>
</comment>
<comment type="subunit">
    <text evidence="1">Homodimer.</text>
</comment>
<comment type="subcellular location">
    <subcellularLocation>
        <location evidence="1">Cytoplasm</location>
    </subcellularLocation>
</comment>
<comment type="similarity">
    <text evidence="1">Belongs to the class-V pyridoxal-phosphate-dependent aminotransferase family. SerC subfamily.</text>
</comment>
<accession>C4L432</accession>
<protein>
    <recommendedName>
        <fullName evidence="1">Phosphoserine aminotransferase</fullName>
        <ecNumber evidence="1">2.6.1.52</ecNumber>
    </recommendedName>
    <alternativeName>
        <fullName evidence="1">Phosphohydroxythreonine aminotransferase</fullName>
        <shortName evidence="1">PSAT</shortName>
    </alternativeName>
</protein>
<reference key="1">
    <citation type="journal article" date="2011" name="J. Bacteriol.">
        <title>Complete genome sequence of the Thermophilic Bacterium Exiguobacterium sp. AT1b.</title>
        <authorList>
            <person name="Vishnivetskaya T.A."/>
            <person name="Lucas S."/>
            <person name="Copeland A."/>
            <person name="Lapidus A."/>
            <person name="Glavina del Rio T."/>
            <person name="Dalin E."/>
            <person name="Tice H."/>
            <person name="Bruce D.C."/>
            <person name="Goodwin L.A."/>
            <person name="Pitluck S."/>
            <person name="Saunders E."/>
            <person name="Brettin T."/>
            <person name="Detter C."/>
            <person name="Han C."/>
            <person name="Larimer F."/>
            <person name="Land M.L."/>
            <person name="Hauser L.J."/>
            <person name="Kyrpides N.C."/>
            <person name="Ovchinnikova G."/>
            <person name="Kathariou S."/>
            <person name="Ramaley R.F."/>
            <person name="Rodrigues D.F."/>
            <person name="Hendrix C."/>
            <person name="Richardson P."/>
            <person name="Tiedje J.M."/>
        </authorList>
    </citation>
    <scope>NUCLEOTIDE SEQUENCE [LARGE SCALE GENOMIC DNA]</scope>
    <source>
        <strain>ATCC BAA-1283 / AT1b</strain>
    </source>
</reference>